<reference key="1">
    <citation type="submission" date="2008-08" db="EMBL/GenBank/DDBJ databases">
        <title>Complete sequence of Vibrio fischeri strain MJ11.</title>
        <authorList>
            <person name="Mandel M.J."/>
            <person name="Stabb E.V."/>
            <person name="Ruby E.G."/>
            <person name="Ferriera S."/>
            <person name="Johnson J."/>
            <person name="Kravitz S."/>
            <person name="Beeson K."/>
            <person name="Sutton G."/>
            <person name="Rogers Y.-H."/>
            <person name="Friedman R."/>
            <person name="Frazier M."/>
            <person name="Venter J.C."/>
        </authorList>
    </citation>
    <scope>NUCLEOTIDE SEQUENCE [LARGE SCALE GENOMIC DNA]</scope>
    <source>
        <strain>MJ11</strain>
    </source>
</reference>
<accession>B5FF00</accession>
<feature type="chain" id="PRO_1000140306" description="HTH-type transcriptional repressor PurR">
    <location>
        <begin position="1"/>
        <end position="337"/>
    </location>
</feature>
<feature type="domain" description="HTH lacI-type" evidence="1">
    <location>
        <begin position="2"/>
        <end position="56"/>
    </location>
</feature>
<feature type="DNA-binding region" description="H-T-H motif" evidence="1">
    <location>
        <begin position="4"/>
        <end position="23"/>
    </location>
</feature>
<feature type="DNA-binding region" evidence="1">
    <location>
        <begin position="48"/>
        <end position="56"/>
    </location>
</feature>
<feature type="binding site" evidence="1">
    <location>
        <position position="73"/>
    </location>
    <ligand>
        <name>hypoxanthine</name>
        <dbReference type="ChEBI" id="CHEBI:17368"/>
    </ligand>
</feature>
<feature type="binding site" evidence="1">
    <location>
        <position position="189"/>
    </location>
    <ligand>
        <name>hypoxanthine</name>
        <dbReference type="ChEBI" id="CHEBI:17368"/>
    </ligand>
</feature>
<feature type="binding site" evidence="1">
    <location>
        <position position="191"/>
    </location>
    <ligand>
        <name>hypoxanthine</name>
        <dbReference type="ChEBI" id="CHEBI:17368"/>
    </ligand>
</feature>
<feature type="binding site" evidence="1">
    <location>
        <position position="220"/>
    </location>
    <ligand>
        <name>hypoxanthine</name>
        <dbReference type="ChEBI" id="CHEBI:17368"/>
    </ligand>
</feature>
<feature type="binding site" evidence="1">
    <location>
        <position position="276"/>
    </location>
    <ligand>
        <name>hypoxanthine</name>
        <dbReference type="ChEBI" id="CHEBI:17368"/>
    </ligand>
</feature>
<dbReference type="EMBL" id="CP001139">
    <property type="protein sequence ID" value="ACH65266.1"/>
    <property type="molecule type" value="Genomic_DNA"/>
</dbReference>
<dbReference type="RefSeq" id="WP_012532934.1">
    <property type="nucleotide sequence ID" value="NC_011184.1"/>
</dbReference>
<dbReference type="SMR" id="B5FF00"/>
<dbReference type="KEGG" id="vfm:VFMJ11_1675"/>
<dbReference type="HOGENOM" id="CLU_037628_6_2_6"/>
<dbReference type="UniPathway" id="UPA00488"/>
<dbReference type="Proteomes" id="UP000001857">
    <property type="component" value="Chromosome I"/>
</dbReference>
<dbReference type="GO" id="GO:0003700">
    <property type="term" value="F:DNA-binding transcription factor activity"/>
    <property type="evidence" value="ECO:0007669"/>
    <property type="project" value="TreeGrafter"/>
</dbReference>
<dbReference type="GO" id="GO:0000976">
    <property type="term" value="F:transcription cis-regulatory region binding"/>
    <property type="evidence" value="ECO:0007669"/>
    <property type="project" value="TreeGrafter"/>
</dbReference>
<dbReference type="GO" id="GO:0045892">
    <property type="term" value="P:negative regulation of DNA-templated transcription"/>
    <property type="evidence" value="ECO:0007669"/>
    <property type="project" value="UniProtKB-UniRule"/>
</dbReference>
<dbReference type="GO" id="GO:0006164">
    <property type="term" value="P:purine nucleotide biosynthetic process"/>
    <property type="evidence" value="ECO:0007669"/>
    <property type="project" value="UniProtKB-UniPathway"/>
</dbReference>
<dbReference type="CDD" id="cd01392">
    <property type="entry name" value="HTH_LacI"/>
    <property type="match status" value="1"/>
</dbReference>
<dbReference type="CDD" id="cd06275">
    <property type="entry name" value="PBP1_PurR"/>
    <property type="match status" value="1"/>
</dbReference>
<dbReference type="FunFam" id="1.10.260.40:FF:000002">
    <property type="entry name" value="HTH-type transcriptional repressor PurR"/>
    <property type="match status" value="1"/>
</dbReference>
<dbReference type="Gene3D" id="3.40.50.2300">
    <property type="match status" value="2"/>
</dbReference>
<dbReference type="Gene3D" id="1.10.260.40">
    <property type="entry name" value="lambda repressor-like DNA-binding domains"/>
    <property type="match status" value="1"/>
</dbReference>
<dbReference type="HAMAP" id="MF_01277">
    <property type="entry name" value="HTH_type_PurR"/>
    <property type="match status" value="1"/>
</dbReference>
<dbReference type="InterPro" id="IPR000843">
    <property type="entry name" value="HTH_LacI"/>
</dbReference>
<dbReference type="InterPro" id="IPR046335">
    <property type="entry name" value="LacI/GalR-like_sensor"/>
</dbReference>
<dbReference type="InterPro" id="IPR010982">
    <property type="entry name" value="Lambda_DNA-bd_dom_sf"/>
</dbReference>
<dbReference type="InterPro" id="IPR028082">
    <property type="entry name" value="Peripla_BP_I"/>
</dbReference>
<dbReference type="InterPro" id="IPR023588">
    <property type="entry name" value="Tscrpt_reg_HTH_PurR"/>
</dbReference>
<dbReference type="PANTHER" id="PTHR30146:SF148">
    <property type="entry name" value="HTH-TYPE TRANSCRIPTIONAL REPRESSOR PURR-RELATED"/>
    <property type="match status" value="1"/>
</dbReference>
<dbReference type="PANTHER" id="PTHR30146">
    <property type="entry name" value="LACI-RELATED TRANSCRIPTIONAL REPRESSOR"/>
    <property type="match status" value="1"/>
</dbReference>
<dbReference type="Pfam" id="PF00356">
    <property type="entry name" value="LacI"/>
    <property type="match status" value="1"/>
</dbReference>
<dbReference type="Pfam" id="PF13377">
    <property type="entry name" value="Peripla_BP_3"/>
    <property type="match status" value="1"/>
</dbReference>
<dbReference type="PRINTS" id="PR00036">
    <property type="entry name" value="HTHLACI"/>
</dbReference>
<dbReference type="SMART" id="SM00354">
    <property type="entry name" value="HTH_LACI"/>
    <property type="match status" value="1"/>
</dbReference>
<dbReference type="SUPFAM" id="SSF47413">
    <property type="entry name" value="lambda repressor-like DNA-binding domains"/>
    <property type="match status" value="1"/>
</dbReference>
<dbReference type="SUPFAM" id="SSF53822">
    <property type="entry name" value="Periplasmic binding protein-like I"/>
    <property type="match status" value="1"/>
</dbReference>
<dbReference type="PROSITE" id="PS00356">
    <property type="entry name" value="HTH_LACI_1"/>
    <property type="match status" value="1"/>
</dbReference>
<dbReference type="PROSITE" id="PS50932">
    <property type="entry name" value="HTH_LACI_2"/>
    <property type="match status" value="1"/>
</dbReference>
<keyword id="KW-0238">DNA-binding</keyword>
<keyword id="KW-0658">Purine biosynthesis</keyword>
<keyword id="KW-0678">Repressor</keyword>
<keyword id="KW-0804">Transcription</keyword>
<keyword id="KW-0805">Transcription regulation</keyword>
<proteinExistence type="inferred from homology"/>
<protein>
    <recommendedName>
        <fullName evidence="1">HTH-type transcriptional repressor PurR</fullName>
    </recommendedName>
    <alternativeName>
        <fullName evidence="1">Pur regulon repressor</fullName>
    </alternativeName>
    <alternativeName>
        <fullName evidence="1">Purine nucleotide synthesis repressor</fullName>
    </alternativeName>
</protein>
<evidence type="ECO:0000255" key="1">
    <source>
        <dbReference type="HAMAP-Rule" id="MF_01277"/>
    </source>
</evidence>
<sequence>MATIKDVAKLAAVSTTTVSHVINKTRFVAEATQKRVWEAVEELNYAPSAVARSLKCNTTRTIGMLVTQSFNPFFAEVMHGVENYCYKQGYTLFMCNTEGDLEKQKHYLRMLAEKRVDGLLVMCSDLNEQLLTLLEKNTELPMVIMDWGPDSPRTDKIIDNSEEGGYLATKHLIENGHTHIACITGQADKVTCKERVRGFERAHADANLSFNPEWILEGDFECASASKAVDKILSIEESKRPTALFCFNDIMALAAISKIQQSGLRVPEDISVIGYDNIELSAYFSPPLTTIHQPKRRVGKTAVEILLERIKDKDHERRVFEMQPEVVTRSSVLNRLK</sequence>
<comment type="function">
    <text evidence="1">Is the main repressor of the genes involved in the de novo synthesis of purine nucleotides, regulating purB, purC, purEK, purF, purHD, purL, purMN and guaBA expression. PurR is allosterically activated to bind its cognate DNA by binding the purine corepressors, hypoxanthine or guanine, thereby effecting transcription repression.</text>
</comment>
<comment type="pathway">
    <text>Purine metabolism; purine nucleotide biosynthesis [regulation].</text>
</comment>
<comment type="subunit">
    <text evidence="1">Homodimer.</text>
</comment>
<comment type="domain">
    <text evidence="1">Consists of two structural and functional domains: an N-terminal DNA-binding domain, approximately the first 60 residues, and a larger C-terminal domain, approximately 280 residues, which imparts the function of corepressor binding and oligomerization.</text>
</comment>
<organism>
    <name type="scientific">Aliivibrio fischeri (strain MJ11)</name>
    <name type="common">Vibrio fischeri</name>
    <dbReference type="NCBI Taxonomy" id="388396"/>
    <lineage>
        <taxon>Bacteria</taxon>
        <taxon>Pseudomonadati</taxon>
        <taxon>Pseudomonadota</taxon>
        <taxon>Gammaproteobacteria</taxon>
        <taxon>Vibrionales</taxon>
        <taxon>Vibrionaceae</taxon>
        <taxon>Aliivibrio</taxon>
    </lineage>
</organism>
<gene>
    <name evidence="1" type="primary">purR</name>
    <name type="ordered locus">VFMJ11_1675</name>
</gene>
<name>PURR_ALIFM</name>